<dbReference type="EC" id="1.10.3.9" evidence="2"/>
<dbReference type="EMBL" id="AP009368">
    <property type="protein sequence ID" value="BAF49934.1"/>
    <property type="molecule type" value="Genomic_DNA"/>
</dbReference>
<dbReference type="RefSeq" id="YP_001123110.1">
    <property type="nucleotide sequence ID" value="NC_009267.1"/>
</dbReference>
<dbReference type="SMR" id="A4QJS8"/>
<dbReference type="GeneID" id="4962421"/>
<dbReference type="GO" id="GO:0009535">
    <property type="term" value="C:chloroplast thylakoid membrane"/>
    <property type="evidence" value="ECO:0007669"/>
    <property type="project" value="UniProtKB-SubCell"/>
</dbReference>
<dbReference type="GO" id="GO:0009523">
    <property type="term" value="C:photosystem II"/>
    <property type="evidence" value="ECO:0007669"/>
    <property type="project" value="UniProtKB-KW"/>
</dbReference>
<dbReference type="GO" id="GO:0016168">
    <property type="term" value="F:chlorophyll binding"/>
    <property type="evidence" value="ECO:0007669"/>
    <property type="project" value="UniProtKB-UniRule"/>
</dbReference>
<dbReference type="GO" id="GO:0045156">
    <property type="term" value="F:electron transporter, transferring electrons within the cyclic electron transport pathway of photosynthesis activity"/>
    <property type="evidence" value="ECO:0007669"/>
    <property type="project" value="InterPro"/>
</dbReference>
<dbReference type="GO" id="GO:0005506">
    <property type="term" value="F:iron ion binding"/>
    <property type="evidence" value="ECO:0007669"/>
    <property type="project" value="UniProtKB-UniRule"/>
</dbReference>
<dbReference type="GO" id="GO:0010242">
    <property type="term" value="F:oxygen evolving activity"/>
    <property type="evidence" value="ECO:0007669"/>
    <property type="project" value="UniProtKB-EC"/>
</dbReference>
<dbReference type="GO" id="GO:0009772">
    <property type="term" value="P:photosynthetic electron transport in photosystem II"/>
    <property type="evidence" value="ECO:0007669"/>
    <property type="project" value="InterPro"/>
</dbReference>
<dbReference type="CDD" id="cd09288">
    <property type="entry name" value="Photosystem-II_D2"/>
    <property type="match status" value="1"/>
</dbReference>
<dbReference type="FunFam" id="1.20.85.10:FF:000001">
    <property type="entry name" value="photosystem II D2 protein-like"/>
    <property type="match status" value="1"/>
</dbReference>
<dbReference type="Gene3D" id="1.20.85.10">
    <property type="entry name" value="Photosystem II protein D1-like"/>
    <property type="match status" value="1"/>
</dbReference>
<dbReference type="HAMAP" id="MF_01383">
    <property type="entry name" value="PSII_PsbD_D2"/>
    <property type="match status" value="1"/>
</dbReference>
<dbReference type="InterPro" id="IPR055266">
    <property type="entry name" value="D1/D2"/>
</dbReference>
<dbReference type="InterPro" id="IPR036854">
    <property type="entry name" value="Photo_II_D1/D2_sf"/>
</dbReference>
<dbReference type="InterPro" id="IPR000484">
    <property type="entry name" value="Photo_RC_L/M"/>
</dbReference>
<dbReference type="InterPro" id="IPR055265">
    <property type="entry name" value="Photo_RC_L/M_CS"/>
</dbReference>
<dbReference type="InterPro" id="IPR005868">
    <property type="entry name" value="PSII_PsbD/D2"/>
</dbReference>
<dbReference type="NCBIfam" id="TIGR01152">
    <property type="entry name" value="psbD"/>
    <property type="match status" value="1"/>
</dbReference>
<dbReference type="PANTHER" id="PTHR33149:SF57">
    <property type="entry name" value="PHOTOSYSTEM II D2 PROTEIN"/>
    <property type="match status" value="1"/>
</dbReference>
<dbReference type="PANTHER" id="PTHR33149">
    <property type="entry name" value="PHOTOSYSTEM II PROTEIN D1"/>
    <property type="match status" value="1"/>
</dbReference>
<dbReference type="Pfam" id="PF00124">
    <property type="entry name" value="Photo_RC"/>
    <property type="match status" value="1"/>
</dbReference>
<dbReference type="PRINTS" id="PR00256">
    <property type="entry name" value="REACTNCENTRE"/>
</dbReference>
<dbReference type="SUPFAM" id="SSF81483">
    <property type="entry name" value="Bacterial photosystem II reaction centre, L and M subunits"/>
    <property type="match status" value="1"/>
</dbReference>
<dbReference type="PROSITE" id="PS00244">
    <property type="entry name" value="REACTION_CENTER"/>
    <property type="match status" value="1"/>
</dbReference>
<accession>A4QJS8</accession>
<comment type="function">
    <text evidence="2">Photosystem II (PSII) is a light-driven water:plastoquinone oxidoreductase that uses light energy to abstract electrons from H(2)O, generating O(2) and a proton gradient subsequently used for ATP formation. It consists of a core antenna complex that captures photons, and an electron transfer chain that converts photonic excitation into a charge separation. The D1/D2 (PsbA/PsbD) reaction center heterodimer binds P680, the primary electron donor of PSII as well as several subsequent electron acceptors. D2 is needed for assembly of a stable PSII complex.</text>
</comment>
<comment type="catalytic activity">
    <reaction evidence="2">
        <text>2 a plastoquinone + 4 hnu + 2 H2O = 2 a plastoquinol + O2</text>
        <dbReference type="Rhea" id="RHEA:36359"/>
        <dbReference type="Rhea" id="RHEA-COMP:9561"/>
        <dbReference type="Rhea" id="RHEA-COMP:9562"/>
        <dbReference type="ChEBI" id="CHEBI:15377"/>
        <dbReference type="ChEBI" id="CHEBI:15379"/>
        <dbReference type="ChEBI" id="CHEBI:17757"/>
        <dbReference type="ChEBI" id="CHEBI:30212"/>
        <dbReference type="ChEBI" id="CHEBI:62192"/>
        <dbReference type="EC" id="1.10.3.9"/>
    </reaction>
</comment>
<comment type="cofactor">
    <text evidence="2">The D1/D2 heterodimer binds P680, chlorophylls that are the primary electron donor of PSII, and subsequent electron acceptors. It shares a non-heme iron and each subunit binds pheophytin, quinone, additional chlorophylls, carotenoids and lipids. There is also a Cl(-1) ion associated with D1 and D2, which is required for oxygen evolution. The PSII complex binds additional chlorophylls, carotenoids and specific lipids.</text>
</comment>
<comment type="subunit">
    <text evidence="2">PSII is composed of 1 copy each of membrane proteins PsbA, PsbB, PsbC, PsbD, PsbE, PsbF, PsbH, PsbI, PsbJ, PsbK, PsbL, PsbM, PsbT, PsbX, PsbY, PsbZ, Psb30/Ycf12, at least 3 peripheral proteins of the oxygen-evolving complex and a large number of cofactors. It forms dimeric complexes.</text>
</comment>
<comment type="subcellular location">
    <subcellularLocation>
        <location evidence="2">Plastid</location>
        <location evidence="2">Chloroplast thylakoid membrane</location>
        <topology evidence="2">Multi-pass membrane protein</topology>
    </subcellularLocation>
</comment>
<comment type="miscellaneous">
    <text evidence="2">2 of the reaction center chlorophylls (ChlD1 and ChlD2) are entirely coordinated by water.</text>
</comment>
<comment type="similarity">
    <text evidence="2">Belongs to the reaction center PufL/M/PsbA/D family.</text>
</comment>
<name>PSBD_OLIPU</name>
<reference key="1">
    <citation type="submission" date="2007-03" db="EMBL/GenBank/DDBJ databases">
        <title>Sequence analysis of Arabidopsis pumila JS2 chloroplast DNA.</title>
        <authorList>
            <person name="Hosouchi T."/>
            <person name="Tsuruoka H."/>
            <person name="Kotani H."/>
        </authorList>
    </citation>
    <scope>NUCLEOTIDE SEQUENCE [LARGE SCALE GENOMIC DNA]</scope>
</reference>
<sequence length="353" mass="39578">MTIALGKFTKDEKDLFDIMDDWLRRDRFVFVGWSGLLLFPCAYFALGGWFTGTTFVTSWYTHGLASSYLEGCNFLTAAVSTPANSLAHSLLLLWGPEAQGDFTRWCQLGGLWTFVALHGAFALIGFMLRQFELARSVQLRPYNAIAFSGPIAVFVSVFLIYPLGQSGWFFAPSFGVAAIFRFILFFQGFHNWTLNPFHMMGVAGVLGAALLCAIHGATVENTLFEDGDGANTFRAFNPTQAEETYSMVTANRFWSQIFGVAFSNKRWLHFFMLFVPVTGLWMSALGVVGLALNLRAYDFVSQEIRAAEDPEFETFYTKNILLNEGIRAWMAAQDQPHENLIFPEEVLPRGNAL</sequence>
<gene>
    <name evidence="2" type="primary">psbD</name>
</gene>
<keyword id="KW-0007">Acetylation</keyword>
<keyword id="KW-0148">Chlorophyll</keyword>
<keyword id="KW-0150">Chloroplast</keyword>
<keyword id="KW-0157">Chromophore</keyword>
<keyword id="KW-0249">Electron transport</keyword>
<keyword id="KW-0408">Iron</keyword>
<keyword id="KW-0460">Magnesium</keyword>
<keyword id="KW-0472">Membrane</keyword>
<keyword id="KW-0479">Metal-binding</keyword>
<keyword id="KW-0560">Oxidoreductase</keyword>
<keyword id="KW-0597">Phosphoprotein</keyword>
<keyword id="KW-0602">Photosynthesis</keyword>
<keyword id="KW-0604">Photosystem II</keyword>
<keyword id="KW-0934">Plastid</keyword>
<keyword id="KW-0793">Thylakoid</keyword>
<keyword id="KW-0812">Transmembrane</keyword>
<keyword id="KW-1133">Transmembrane helix</keyword>
<keyword id="KW-0813">Transport</keyword>
<proteinExistence type="inferred from homology"/>
<geneLocation type="chloroplast"/>
<protein>
    <recommendedName>
        <fullName evidence="2">Photosystem II D2 protein</fullName>
        <shortName evidence="2">PSII D2 protein</shortName>
        <ecNumber evidence="2">1.10.3.9</ecNumber>
    </recommendedName>
    <alternativeName>
        <fullName evidence="2">Photosystem Q(A) protein</fullName>
    </alternativeName>
</protein>
<organism>
    <name type="scientific">Olimarabidopsis pumila</name>
    <name type="common">Dwarf rocket</name>
    <name type="synonym">Arabidopsis griffithiana</name>
    <dbReference type="NCBI Taxonomy" id="74718"/>
    <lineage>
        <taxon>Eukaryota</taxon>
        <taxon>Viridiplantae</taxon>
        <taxon>Streptophyta</taxon>
        <taxon>Embryophyta</taxon>
        <taxon>Tracheophyta</taxon>
        <taxon>Spermatophyta</taxon>
        <taxon>Magnoliopsida</taxon>
        <taxon>eudicotyledons</taxon>
        <taxon>Gunneridae</taxon>
        <taxon>Pentapetalae</taxon>
        <taxon>rosids</taxon>
        <taxon>malvids</taxon>
        <taxon>Brassicales</taxon>
        <taxon>Brassicaceae</taxon>
        <taxon>Alyssopsideae</taxon>
        <taxon>Olimarabidopsis</taxon>
    </lineage>
</organism>
<feature type="initiator methionine" description="Removed" evidence="1">
    <location>
        <position position="1"/>
    </location>
</feature>
<feature type="chain" id="PRO_0000359679" description="Photosystem II D2 protein">
    <location>
        <begin position="2"/>
        <end position="353"/>
    </location>
</feature>
<feature type="transmembrane region" description="Helical" evidence="2">
    <location>
        <begin position="41"/>
        <end position="61"/>
    </location>
</feature>
<feature type="transmembrane region" description="Helical" evidence="2">
    <location>
        <begin position="125"/>
        <end position="141"/>
    </location>
</feature>
<feature type="transmembrane region" description="Helical" evidence="2">
    <location>
        <begin position="153"/>
        <end position="166"/>
    </location>
</feature>
<feature type="transmembrane region" description="Helical" evidence="2">
    <location>
        <begin position="208"/>
        <end position="228"/>
    </location>
</feature>
<feature type="transmembrane region" description="Helical" evidence="2">
    <location>
        <begin position="279"/>
        <end position="295"/>
    </location>
</feature>
<feature type="binding site" description="axial binding residue" evidence="2">
    <location>
        <position position="118"/>
    </location>
    <ligand>
        <name>chlorophyll a</name>
        <dbReference type="ChEBI" id="CHEBI:58416"/>
        <label>ChlzD2</label>
    </ligand>
    <ligandPart>
        <name>Mg</name>
        <dbReference type="ChEBI" id="CHEBI:25107"/>
    </ligandPart>
</feature>
<feature type="binding site" evidence="2">
    <location>
        <position position="130"/>
    </location>
    <ligand>
        <name>pheophytin a</name>
        <dbReference type="ChEBI" id="CHEBI:136840"/>
        <label>D2</label>
    </ligand>
</feature>
<feature type="binding site" evidence="2">
    <location>
        <position position="143"/>
    </location>
    <ligand>
        <name>pheophytin a</name>
        <dbReference type="ChEBI" id="CHEBI:136840"/>
        <label>D2</label>
    </ligand>
</feature>
<feature type="binding site" description="axial binding residue" evidence="2">
    <location>
        <position position="198"/>
    </location>
    <ligand>
        <name>chlorophyll a</name>
        <dbReference type="ChEBI" id="CHEBI:58416"/>
        <label>PD2</label>
    </ligand>
    <ligandPart>
        <name>Mg</name>
        <dbReference type="ChEBI" id="CHEBI:25107"/>
    </ligandPart>
</feature>
<feature type="binding site" evidence="2">
    <location>
        <position position="215"/>
    </location>
    <ligand>
        <name>a plastoquinone</name>
        <dbReference type="ChEBI" id="CHEBI:17757"/>
        <label>Q(A)</label>
    </ligand>
</feature>
<feature type="binding site" evidence="2">
    <location>
        <position position="215"/>
    </location>
    <ligand>
        <name>Fe cation</name>
        <dbReference type="ChEBI" id="CHEBI:24875"/>
        <note>ligand shared with heterodimeric partner</note>
    </ligand>
</feature>
<feature type="binding site" evidence="2">
    <location>
        <position position="262"/>
    </location>
    <ligand>
        <name>a plastoquinone</name>
        <dbReference type="ChEBI" id="CHEBI:17757"/>
        <label>Q(A)</label>
    </ligand>
</feature>
<feature type="binding site" evidence="2">
    <location>
        <position position="269"/>
    </location>
    <ligand>
        <name>Fe cation</name>
        <dbReference type="ChEBI" id="CHEBI:24875"/>
        <note>ligand shared with heterodimeric partner</note>
    </ligand>
</feature>
<feature type="modified residue" description="N-acetylthreonine" evidence="1">
    <location>
        <position position="2"/>
    </location>
</feature>
<feature type="modified residue" description="Phosphothreonine" evidence="1">
    <location>
        <position position="2"/>
    </location>
</feature>
<evidence type="ECO:0000250" key="1">
    <source>
        <dbReference type="UniProtKB" id="P56761"/>
    </source>
</evidence>
<evidence type="ECO:0000255" key="2">
    <source>
        <dbReference type="HAMAP-Rule" id="MF_01383"/>
    </source>
</evidence>